<proteinExistence type="evidence at transcript level"/>
<organism>
    <name type="scientific">Homo sapiens</name>
    <name type="common">Human</name>
    <dbReference type="NCBI Taxonomy" id="9606"/>
    <lineage>
        <taxon>Eukaryota</taxon>
        <taxon>Metazoa</taxon>
        <taxon>Chordata</taxon>
        <taxon>Craniata</taxon>
        <taxon>Vertebrata</taxon>
        <taxon>Euteleostomi</taxon>
        <taxon>Mammalia</taxon>
        <taxon>Eutheria</taxon>
        <taxon>Euarchontoglires</taxon>
        <taxon>Primates</taxon>
        <taxon>Haplorrhini</taxon>
        <taxon>Catarrhini</taxon>
        <taxon>Hominidae</taxon>
        <taxon>Homo</taxon>
    </lineage>
</organism>
<sequence>MWPFRLRCPIYFKTRLLYSSSQDGFLSSSTNYYNHRTYPGLVNWLFVLTEPELTGELGDDDRKGMHTGGIIRWLGRPSSQLKPIFHAEERRVPPPPERLVGRASPREQATVFKRICAPLHAEVFCRAGLCACHPDCTAAG</sequence>
<accession>Q6ZVL8</accession>
<keyword id="KW-1185">Reference proteome</keyword>
<dbReference type="EMBL" id="AK124375">
    <property type="protein sequence ID" value="BAC85843.1"/>
    <property type="molecule type" value="mRNA"/>
</dbReference>
<dbReference type="BioMuta" id="-"/>
<dbReference type="MassIVE" id="Q6ZVL8"/>
<dbReference type="neXtProt" id="NX_Q6ZVL8"/>
<dbReference type="InParanoid" id="Q6ZVL8"/>
<dbReference type="PAN-GO" id="Q6ZVL8">
    <property type="GO annotations" value="0 GO annotations based on evolutionary models"/>
</dbReference>
<dbReference type="Pharos" id="Q6ZVL8">
    <property type="development level" value="Tdark"/>
</dbReference>
<dbReference type="Proteomes" id="UP000005640">
    <property type="component" value="Unplaced"/>
</dbReference>
<dbReference type="RNAct" id="Q6ZVL8">
    <property type="molecule type" value="protein"/>
</dbReference>
<name>YP033_HUMAN</name>
<protein>
    <recommendedName>
        <fullName>Putative uncharacterized protein FLJ42384</fullName>
    </recommendedName>
</protein>
<feature type="chain" id="PRO_0000337746" description="Putative uncharacterized protein FLJ42384">
    <location>
        <begin position="1"/>
        <end position="140"/>
    </location>
</feature>
<feature type="sequence variant" id="VAR_043708" description="In dbSNP:rs8060538.">
    <original>T</original>
    <variation>A</variation>
    <location>
        <position position="30"/>
    </location>
</feature>
<feature type="sequence variant" id="VAR_043709" description="In dbSNP:rs8055082.">
    <original>G</original>
    <variation>R</variation>
    <location>
        <position position="75"/>
    </location>
</feature>
<feature type="sequence variant" id="VAR_043710" description="In dbSNP:rs9940490.">
    <original>K</original>
    <variation>R</variation>
    <location>
        <position position="82"/>
    </location>
</feature>
<feature type="sequence variant" id="VAR_043711" description="In dbSNP:rs8053661.">
    <original>P</original>
    <variation>S</variation>
    <location>
        <position position="105"/>
    </location>
</feature>
<feature type="sequence variant" id="VAR_043712" description="In dbSNP:rs8055382.">
    <original>C</original>
    <variation>S</variation>
    <location>
        <position position="136"/>
    </location>
</feature>
<reference key="1">
    <citation type="journal article" date="2004" name="Nat. Genet.">
        <title>Complete sequencing and characterization of 21,243 full-length human cDNAs.</title>
        <authorList>
            <person name="Ota T."/>
            <person name="Suzuki Y."/>
            <person name="Nishikawa T."/>
            <person name="Otsuki T."/>
            <person name="Sugiyama T."/>
            <person name="Irie R."/>
            <person name="Wakamatsu A."/>
            <person name="Hayashi K."/>
            <person name="Sato H."/>
            <person name="Nagai K."/>
            <person name="Kimura K."/>
            <person name="Makita H."/>
            <person name="Sekine M."/>
            <person name="Obayashi M."/>
            <person name="Nishi T."/>
            <person name="Shibahara T."/>
            <person name="Tanaka T."/>
            <person name="Ishii S."/>
            <person name="Yamamoto J."/>
            <person name="Saito K."/>
            <person name="Kawai Y."/>
            <person name="Isono Y."/>
            <person name="Nakamura Y."/>
            <person name="Nagahari K."/>
            <person name="Murakami K."/>
            <person name="Yasuda T."/>
            <person name="Iwayanagi T."/>
            <person name="Wagatsuma M."/>
            <person name="Shiratori A."/>
            <person name="Sudo H."/>
            <person name="Hosoiri T."/>
            <person name="Kaku Y."/>
            <person name="Kodaira H."/>
            <person name="Kondo H."/>
            <person name="Sugawara M."/>
            <person name="Takahashi M."/>
            <person name="Kanda K."/>
            <person name="Yokoi T."/>
            <person name="Furuya T."/>
            <person name="Kikkawa E."/>
            <person name="Omura Y."/>
            <person name="Abe K."/>
            <person name="Kamihara K."/>
            <person name="Katsuta N."/>
            <person name="Sato K."/>
            <person name="Tanikawa M."/>
            <person name="Yamazaki M."/>
            <person name="Ninomiya K."/>
            <person name="Ishibashi T."/>
            <person name="Yamashita H."/>
            <person name="Murakawa K."/>
            <person name="Fujimori K."/>
            <person name="Tanai H."/>
            <person name="Kimata M."/>
            <person name="Watanabe M."/>
            <person name="Hiraoka S."/>
            <person name="Chiba Y."/>
            <person name="Ishida S."/>
            <person name="Ono Y."/>
            <person name="Takiguchi S."/>
            <person name="Watanabe S."/>
            <person name="Yosida M."/>
            <person name="Hotuta T."/>
            <person name="Kusano J."/>
            <person name="Kanehori K."/>
            <person name="Takahashi-Fujii A."/>
            <person name="Hara H."/>
            <person name="Tanase T.-O."/>
            <person name="Nomura Y."/>
            <person name="Togiya S."/>
            <person name="Komai F."/>
            <person name="Hara R."/>
            <person name="Takeuchi K."/>
            <person name="Arita M."/>
            <person name="Imose N."/>
            <person name="Musashino K."/>
            <person name="Yuuki H."/>
            <person name="Oshima A."/>
            <person name="Sasaki N."/>
            <person name="Aotsuka S."/>
            <person name="Yoshikawa Y."/>
            <person name="Matsunawa H."/>
            <person name="Ichihara T."/>
            <person name="Shiohata N."/>
            <person name="Sano S."/>
            <person name="Moriya S."/>
            <person name="Momiyama H."/>
            <person name="Satoh N."/>
            <person name="Takami S."/>
            <person name="Terashima Y."/>
            <person name="Suzuki O."/>
            <person name="Nakagawa S."/>
            <person name="Senoh A."/>
            <person name="Mizoguchi H."/>
            <person name="Goto Y."/>
            <person name="Shimizu F."/>
            <person name="Wakebe H."/>
            <person name="Hishigaki H."/>
            <person name="Watanabe T."/>
            <person name="Sugiyama A."/>
            <person name="Takemoto M."/>
            <person name="Kawakami B."/>
            <person name="Yamazaki M."/>
            <person name="Watanabe K."/>
            <person name="Kumagai A."/>
            <person name="Itakura S."/>
            <person name="Fukuzumi Y."/>
            <person name="Fujimori Y."/>
            <person name="Komiyama M."/>
            <person name="Tashiro H."/>
            <person name="Tanigami A."/>
            <person name="Fujiwara T."/>
            <person name="Ono T."/>
            <person name="Yamada K."/>
            <person name="Fujii Y."/>
            <person name="Ozaki K."/>
            <person name="Hirao M."/>
            <person name="Ohmori Y."/>
            <person name="Kawabata A."/>
            <person name="Hikiji T."/>
            <person name="Kobatake N."/>
            <person name="Inagaki H."/>
            <person name="Ikema Y."/>
            <person name="Okamoto S."/>
            <person name="Okitani R."/>
            <person name="Kawakami T."/>
            <person name="Noguchi S."/>
            <person name="Itoh T."/>
            <person name="Shigeta K."/>
            <person name="Senba T."/>
            <person name="Matsumura K."/>
            <person name="Nakajima Y."/>
            <person name="Mizuno T."/>
            <person name="Morinaga M."/>
            <person name="Sasaki M."/>
            <person name="Togashi T."/>
            <person name="Oyama M."/>
            <person name="Hata H."/>
            <person name="Watanabe M."/>
            <person name="Komatsu T."/>
            <person name="Mizushima-Sugano J."/>
            <person name="Satoh T."/>
            <person name="Shirai Y."/>
            <person name="Takahashi Y."/>
            <person name="Nakagawa K."/>
            <person name="Okumura K."/>
            <person name="Nagase T."/>
            <person name="Nomura N."/>
            <person name="Kikuchi H."/>
            <person name="Masuho Y."/>
            <person name="Yamashita R."/>
            <person name="Nakai K."/>
            <person name="Yada T."/>
            <person name="Nakamura Y."/>
            <person name="Ohara O."/>
            <person name="Isogai T."/>
            <person name="Sugano S."/>
        </authorList>
    </citation>
    <scope>NUCLEOTIDE SEQUENCE [LARGE SCALE MRNA]</scope>
    <source>
        <tissue>Uterus</tissue>
    </source>
</reference>